<dbReference type="EC" id="2.4.99.28" evidence="2"/>
<dbReference type="EMBL" id="CP002243">
    <property type="protein sequence ID" value="AEI74865.1"/>
    <property type="molecule type" value="Genomic_DNA"/>
</dbReference>
<dbReference type="SMR" id="F7XXN9"/>
<dbReference type="STRING" id="903503.MEPCIT_218"/>
<dbReference type="KEGG" id="men:MEPCIT_218"/>
<dbReference type="eggNOG" id="COG0772">
    <property type="taxonomic scope" value="Bacteria"/>
</dbReference>
<dbReference type="HOGENOM" id="CLU_029243_1_1_6"/>
<dbReference type="OrthoDB" id="9768187at2"/>
<dbReference type="UniPathway" id="UPA00219"/>
<dbReference type="Proteomes" id="UP000000504">
    <property type="component" value="Chromosome"/>
</dbReference>
<dbReference type="GO" id="GO:0032153">
    <property type="term" value="C:cell division site"/>
    <property type="evidence" value="ECO:0007669"/>
    <property type="project" value="UniProtKB-UniRule"/>
</dbReference>
<dbReference type="GO" id="GO:0005886">
    <property type="term" value="C:plasma membrane"/>
    <property type="evidence" value="ECO:0007669"/>
    <property type="project" value="UniProtKB-SubCell"/>
</dbReference>
<dbReference type="GO" id="GO:0015648">
    <property type="term" value="F:lipid-linked peptidoglycan transporter activity"/>
    <property type="evidence" value="ECO:0007669"/>
    <property type="project" value="TreeGrafter"/>
</dbReference>
<dbReference type="GO" id="GO:0008955">
    <property type="term" value="F:peptidoglycan glycosyltransferase activity"/>
    <property type="evidence" value="ECO:0007669"/>
    <property type="project" value="UniProtKB-UniRule"/>
</dbReference>
<dbReference type="GO" id="GO:0071555">
    <property type="term" value="P:cell wall organization"/>
    <property type="evidence" value="ECO:0007669"/>
    <property type="project" value="UniProtKB-KW"/>
</dbReference>
<dbReference type="GO" id="GO:0043093">
    <property type="term" value="P:FtsZ-dependent cytokinesis"/>
    <property type="evidence" value="ECO:0007669"/>
    <property type="project" value="UniProtKB-UniRule"/>
</dbReference>
<dbReference type="GO" id="GO:0009252">
    <property type="term" value="P:peptidoglycan biosynthetic process"/>
    <property type="evidence" value="ECO:0007669"/>
    <property type="project" value="UniProtKB-UniRule"/>
</dbReference>
<dbReference type="GO" id="GO:0008360">
    <property type="term" value="P:regulation of cell shape"/>
    <property type="evidence" value="ECO:0007669"/>
    <property type="project" value="UniProtKB-KW"/>
</dbReference>
<dbReference type="HAMAP" id="MF_00913">
    <property type="entry name" value="PGT_FtsW_proteobact"/>
    <property type="match status" value="1"/>
</dbReference>
<dbReference type="InterPro" id="IPR018365">
    <property type="entry name" value="Cell_cycle_FtsW-rel_CS"/>
</dbReference>
<dbReference type="InterPro" id="IPR013437">
    <property type="entry name" value="FtsW"/>
</dbReference>
<dbReference type="InterPro" id="IPR001182">
    <property type="entry name" value="FtsW/RodA"/>
</dbReference>
<dbReference type="NCBIfam" id="TIGR02614">
    <property type="entry name" value="ftsW"/>
    <property type="match status" value="1"/>
</dbReference>
<dbReference type="NCBIfam" id="NF008042">
    <property type="entry name" value="PRK10774.1"/>
    <property type="match status" value="1"/>
</dbReference>
<dbReference type="PANTHER" id="PTHR30474">
    <property type="entry name" value="CELL CYCLE PROTEIN"/>
    <property type="match status" value="1"/>
</dbReference>
<dbReference type="PANTHER" id="PTHR30474:SF2">
    <property type="entry name" value="PEPTIDOGLYCAN GLYCOSYLTRANSFERASE FTSW-RELATED"/>
    <property type="match status" value="1"/>
</dbReference>
<dbReference type="Pfam" id="PF01098">
    <property type="entry name" value="FTSW_RODA_SPOVE"/>
    <property type="match status" value="1"/>
</dbReference>
<dbReference type="PROSITE" id="PS00428">
    <property type="entry name" value="FTSW_RODA_SPOVE"/>
    <property type="match status" value="1"/>
</dbReference>
<evidence type="ECO:0000255" key="1"/>
<evidence type="ECO:0000255" key="2">
    <source>
        <dbReference type="HAMAP-Rule" id="MF_00913"/>
    </source>
</evidence>
<name>FTSW_MOREP</name>
<organism>
    <name type="scientific">Moranella endobia (strain PCIT)</name>
    <dbReference type="NCBI Taxonomy" id="903503"/>
    <lineage>
        <taxon>Bacteria</taxon>
        <taxon>Pseudomonadati</taxon>
        <taxon>Pseudomonadota</taxon>
        <taxon>Gammaproteobacteria</taxon>
        <taxon>Enterobacterales</taxon>
        <taxon>Enterobacteriaceae</taxon>
        <taxon>Candidatus Moranella</taxon>
    </lineage>
</organism>
<protein>
    <recommendedName>
        <fullName evidence="2">Probable peptidoglycan glycosyltransferase FtsW</fullName>
        <shortName evidence="2">PGT</shortName>
        <ecNumber evidence="2">2.4.99.28</ecNumber>
    </recommendedName>
    <alternativeName>
        <fullName evidence="2">Cell division protein FtsW</fullName>
    </alternativeName>
    <alternativeName>
        <fullName evidence="2">Cell wall polymerase</fullName>
    </alternativeName>
    <alternativeName>
        <fullName evidence="2">Peptidoglycan polymerase</fullName>
        <shortName evidence="2">PG polymerase</shortName>
    </alternativeName>
</protein>
<reference key="1">
    <citation type="journal article" date="2011" name="Curr. Biol.">
        <title>An interdependent metabolic patchwork in the nested symbiosis of mealybugs.</title>
        <authorList>
            <person name="McCutcheon J.P."/>
            <person name="von Dohlen C.D."/>
        </authorList>
    </citation>
    <scope>NUCLEOTIDE SEQUENCE [LARGE SCALE GENOMIC DNA]</scope>
    <source>
        <strain>PCIT</strain>
    </source>
</reference>
<feature type="chain" id="PRO_0000415199" description="Probable peptidoglycan glycosyltransferase FtsW">
    <location>
        <begin position="1"/>
        <end position="379"/>
    </location>
</feature>
<feature type="topological domain" description="Cytoplasmic" evidence="1">
    <location>
        <begin position="1"/>
        <end position="15"/>
    </location>
</feature>
<feature type="transmembrane region" description="Helical" evidence="2">
    <location>
        <begin position="16"/>
        <end position="36"/>
    </location>
</feature>
<feature type="topological domain" description="Periplasmic" evidence="1">
    <location>
        <begin position="37"/>
        <end position="52"/>
    </location>
</feature>
<feature type="transmembrane region" description="Helical" evidence="2">
    <location>
        <begin position="53"/>
        <end position="73"/>
    </location>
</feature>
<feature type="topological domain" description="Cytoplasmic" evidence="1">
    <location>
        <begin position="74"/>
        <end position="79"/>
    </location>
</feature>
<feature type="transmembrane region" description="Helical" evidence="2">
    <location>
        <begin position="80"/>
        <end position="100"/>
    </location>
</feature>
<feature type="topological domain" description="Periplasmic" evidence="1">
    <location>
        <begin position="101"/>
        <end position="113"/>
    </location>
</feature>
<feature type="transmembrane region" description="Helical" evidence="2">
    <location>
        <begin position="114"/>
        <end position="133"/>
    </location>
</feature>
<feature type="topological domain" description="Cytoplasmic" evidence="1">
    <location>
        <begin position="134"/>
        <end position="139"/>
    </location>
</feature>
<feature type="transmembrane region" description="Helical" evidence="2">
    <location>
        <begin position="140"/>
        <end position="162"/>
    </location>
</feature>
<feature type="topological domain" description="Periplasmic" evidence="1">
    <location>
        <begin position="163"/>
        <end position="165"/>
    </location>
</feature>
<feature type="transmembrane region" description="Helical" evidence="2">
    <location>
        <begin position="166"/>
        <end position="183"/>
    </location>
</feature>
<feature type="topological domain" description="Cytoplasmic" evidence="1">
    <location>
        <begin position="184"/>
        <end position="186"/>
    </location>
</feature>
<feature type="transmembrane region" description="Helical" evidence="2">
    <location>
        <begin position="187"/>
        <end position="207"/>
    </location>
</feature>
<feature type="topological domain" description="Periplasmic" evidence="1">
    <location>
        <begin position="208"/>
        <end position="269"/>
    </location>
</feature>
<feature type="transmembrane region" description="Helical" evidence="2">
    <location>
        <begin position="270"/>
        <end position="290"/>
    </location>
</feature>
<feature type="topological domain" description="Cytoplasmic" evidence="1">
    <location>
        <begin position="291"/>
        <end position="301"/>
    </location>
</feature>
<feature type="transmembrane region" description="Helical" evidence="2">
    <location>
        <begin position="302"/>
        <end position="322"/>
    </location>
</feature>
<feature type="topological domain" description="Periplasmic" evidence="1">
    <location>
        <begin position="323"/>
        <end position="342"/>
    </location>
</feature>
<feature type="transmembrane region" description="Helical" evidence="2">
    <location>
        <begin position="343"/>
        <end position="363"/>
    </location>
</feature>
<feature type="topological domain" description="Cytoplasmic" evidence="1">
    <location>
        <begin position="364"/>
        <end position="379"/>
    </location>
</feature>
<proteinExistence type="inferred from homology"/>
<sequence length="379" mass="41987">MHKTEAQTYLLYDRTLLLLTMGLVGIGLVMVISTSMPIGVRLSEDPFYFARRYAFYLGLAVVLSLVTLGIPMASWQRGSSLILLITLIMLLLVLIAGQSVNGAVRWLALGPWRIQPAELSKLALFCYLASYLVRKAEEVRTNFWGFCKPIGVMVLLAILLLAQPDLGTVLVLFITTLAMLFLAEAKIWQFLPIIGTGILAVMLLIIAKPYRRRRVTSFLNPWDDPFGRGYQLTNSLIAFGRGELWGQGLGNSIQKFEYLTEAHTDFICSILGEELGYFGVLLALLMVFLVAFRAMSIGRKALAINQIFSGFLACSIGIWFSFQTMVNVGAAAGMLPTKGLTLPFISYGGSSMLIMLTAIVLLIRIDFETRLAKLQAFVR</sequence>
<gene>
    <name evidence="2" type="primary">ftsW</name>
    <name type="ordered locus">MEPCIT_218</name>
</gene>
<keyword id="KW-0131">Cell cycle</keyword>
<keyword id="KW-0132">Cell division</keyword>
<keyword id="KW-0997">Cell inner membrane</keyword>
<keyword id="KW-1003">Cell membrane</keyword>
<keyword id="KW-0133">Cell shape</keyword>
<keyword id="KW-0961">Cell wall biogenesis/degradation</keyword>
<keyword id="KW-0328">Glycosyltransferase</keyword>
<keyword id="KW-0472">Membrane</keyword>
<keyword id="KW-0573">Peptidoglycan synthesis</keyword>
<keyword id="KW-1185">Reference proteome</keyword>
<keyword id="KW-0808">Transferase</keyword>
<keyword id="KW-0812">Transmembrane</keyword>
<keyword id="KW-1133">Transmembrane helix</keyword>
<accession>F7XXN9</accession>
<comment type="function">
    <text evidence="2">Peptidoglycan polymerase that is essential for cell division.</text>
</comment>
<comment type="catalytic activity">
    <reaction evidence="2">
        <text>[GlcNAc-(1-&gt;4)-Mur2Ac(oyl-L-Ala-gamma-D-Glu-L-Lys-D-Ala-D-Ala)](n)-di-trans,octa-cis-undecaprenyl diphosphate + beta-D-GlcNAc-(1-&gt;4)-Mur2Ac(oyl-L-Ala-gamma-D-Glu-L-Lys-D-Ala-D-Ala)-di-trans,octa-cis-undecaprenyl diphosphate = [GlcNAc-(1-&gt;4)-Mur2Ac(oyl-L-Ala-gamma-D-Glu-L-Lys-D-Ala-D-Ala)](n+1)-di-trans,octa-cis-undecaprenyl diphosphate + di-trans,octa-cis-undecaprenyl diphosphate + H(+)</text>
        <dbReference type="Rhea" id="RHEA:23708"/>
        <dbReference type="Rhea" id="RHEA-COMP:9602"/>
        <dbReference type="Rhea" id="RHEA-COMP:9603"/>
        <dbReference type="ChEBI" id="CHEBI:15378"/>
        <dbReference type="ChEBI" id="CHEBI:58405"/>
        <dbReference type="ChEBI" id="CHEBI:60033"/>
        <dbReference type="ChEBI" id="CHEBI:78435"/>
        <dbReference type="EC" id="2.4.99.28"/>
    </reaction>
</comment>
<comment type="pathway">
    <text evidence="2">Cell wall biogenesis; peptidoglycan biosynthesis.</text>
</comment>
<comment type="subcellular location">
    <subcellularLocation>
        <location evidence="2">Cell inner membrane</location>
        <topology evidence="2">Multi-pass membrane protein</topology>
    </subcellularLocation>
    <text evidence="2">Localizes to the division septum.</text>
</comment>
<comment type="similarity">
    <text evidence="2">Belongs to the SEDS family. FtsW subfamily.</text>
</comment>